<dbReference type="EMBL" id="AK143537">
    <property type="protein sequence ID" value="BAE25424.1"/>
    <property type="molecule type" value="mRNA"/>
</dbReference>
<dbReference type="EMBL" id="BC014817">
    <property type="protein sequence ID" value="AAH14817.1"/>
    <property type="status" value="ALT_INIT"/>
    <property type="molecule type" value="mRNA"/>
</dbReference>
<dbReference type="CCDS" id="CCDS37825.1"/>
<dbReference type="RefSeq" id="NP_082723.2">
    <property type="nucleotide sequence ID" value="NM_028447.3"/>
</dbReference>
<dbReference type="RefSeq" id="XP_006526350.1">
    <property type="nucleotide sequence ID" value="XM_006526287.3"/>
</dbReference>
<dbReference type="RefSeq" id="XP_006526351.1">
    <property type="nucleotide sequence ID" value="XM_006526288.3"/>
</dbReference>
<dbReference type="RefSeq" id="XP_006526352.1">
    <property type="nucleotide sequence ID" value="XM_006526289.2"/>
</dbReference>
<dbReference type="RefSeq" id="XP_030106477.1">
    <property type="nucleotide sequence ID" value="XM_030250617.1"/>
</dbReference>
<dbReference type="RefSeq" id="XP_030106478.1">
    <property type="nucleotide sequence ID" value="XM_030250618.1"/>
</dbReference>
<dbReference type="SMR" id="Q3UPH1"/>
<dbReference type="BioGRID" id="215793">
    <property type="interactions" value="5"/>
</dbReference>
<dbReference type="FunCoup" id="Q3UPH1">
    <property type="interactions" value="1801"/>
</dbReference>
<dbReference type="STRING" id="10090.ENSMUSP00000025490"/>
<dbReference type="GlyGen" id="Q3UPH1">
    <property type="glycosylation" value="2 sites, 1 N-linked glycan (1 site), 1 O-linked glycan (1 site)"/>
</dbReference>
<dbReference type="iPTMnet" id="Q3UPH1"/>
<dbReference type="PhosphoSitePlus" id="Q3UPH1"/>
<dbReference type="jPOST" id="Q3UPH1"/>
<dbReference type="PaxDb" id="10090-ENSMUSP00000025490"/>
<dbReference type="PeptideAtlas" id="Q3UPH1"/>
<dbReference type="ProteomicsDB" id="291801"/>
<dbReference type="Pumba" id="Q3UPH1"/>
<dbReference type="Antibodypedia" id="45054">
    <property type="antibodies" value="65 antibodies from 17 providers"/>
</dbReference>
<dbReference type="DNASU" id="73137"/>
<dbReference type="Ensembl" id="ENSMUST00000025490.10">
    <property type="protein sequence ID" value="ENSMUSP00000025490.9"/>
    <property type="gene ID" value="ENSMUSG00000024594.10"/>
</dbReference>
<dbReference type="GeneID" id="73137"/>
<dbReference type="KEGG" id="mmu:73137"/>
<dbReference type="UCSC" id="uc008ezb.2">
    <property type="organism name" value="mouse"/>
</dbReference>
<dbReference type="AGR" id="MGI:1916106"/>
<dbReference type="CTD" id="133619"/>
<dbReference type="MGI" id="MGI:1916106">
    <property type="gene designation" value="Prrc1"/>
</dbReference>
<dbReference type="VEuPathDB" id="HostDB:ENSMUSG00000024594"/>
<dbReference type="eggNOG" id="ENOG502QUZV">
    <property type="taxonomic scope" value="Eukaryota"/>
</dbReference>
<dbReference type="GeneTree" id="ENSGT00390000003837"/>
<dbReference type="HOGENOM" id="CLU_041959_0_0_1"/>
<dbReference type="InParanoid" id="Q3UPH1"/>
<dbReference type="OMA" id="ELFPDQW"/>
<dbReference type="OrthoDB" id="4968544at2759"/>
<dbReference type="PhylomeDB" id="Q3UPH1"/>
<dbReference type="TreeFam" id="TF343676"/>
<dbReference type="BioGRID-ORCS" id="73137">
    <property type="hits" value="1 hit in 77 CRISPR screens"/>
</dbReference>
<dbReference type="ChiTaRS" id="Prrc1">
    <property type="organism name" value="mouse"/>
</dbReference>
<dbReference type="PRO" id="PR:Q3UPH1"/>
<dbReference type="Proteomes" id="UP000000589">
    <property type="component" value="Chromosome 18"/>
</dbReference>
<dbReference type="RNAct" id="Q3UPH1">
    <property type="molecule type" value="protein"/>
</dbReference>
<dbReference type="Bgee" id="ENSMUSG00000024594">
    <property type="expression patterns" value="Expressed in ureter and 253 other cell types or tissues"/>
</dbReference>
<dbReference type="ExpressionAtlas" id="Q3UPH1">
    <property type="expression patterns" value="baseline and differential"/>
</dbReference>
<dbReference type="GO" id="GO:0005737">
    <property type="term" value="C:cytoplasm"/>
    <property type="evidence" value="ECO:0000250"/>
    <property type="project" value="UniProtKB"/>
</dbReference>
<dbReference type="GO" id="GO:0005794">
    <property type="term" value="C:Golgi apparatus"/>
    <property type="evidence" value="ECO:0000250"/>
    <property type="project" value="UniProtKB"/>
</dbReference>
<dbReference type="GO" id="GO:0042802">
    <property type="term" value="F:identical protein binding"/>
    <property type="evidence" value="ECO:0000353"/>
    <property type="project" value="MGI"/>
</dbReference>
<dbReference type="FunFam" id="3.90.950.10:FF:000006">
    <property type="entry name" value="PRRC1 isoform 1"/>
    <property type="match status" value="1"/>
</dbReference>
<dbReference type="Gene3D" id="3.90.950.10">
    <property type="match status" value="1"/>
</dbReference>
<dbReference type="InterPro" id="IPR029001">
    <property type="entry name" value="ITPase-like_fam"/>
</dbReference>
<dbReference type="InterPro" id="IPR026533">
    <property type="entry name" value="NTPase/PRRC1"/>
</dbReference>
<dbReference type="InterPro" id="IPR026534">
    <property type="entry name" value="PRRC1"/>
</dbReference>
<dbReference type="PANTHER" id="PTHR23276">
    <property type="entry name" value="PROTEIN PRRC1"/>
    <property type="match status" value="1"/>
</dbReference>
<dbReference type="PANTHER" id="PTHR23276:SF2">
    <property type="entry name" value="PROTEIN PRRC1"/>
    <property type="match status" value="1"/>
</dbReference>
<dbReference type="Pfam" id="PF01931">
    <property type="entry name" value="NTPase_I-T"/>
    <property type="match status" value="1"/>
</dbReference>
<dbReference type="SUPFAM" id="SSF52972">
    <property type="entry name" value="ITPase-like"/>
    <property type="match status" value="1"/>
</dbReference>
<feature type="chain" id="PRO_0000307339" description="Protein PRRC1">
    <location>
        <begin position="1"/>
        <end position="443"/>
    </location>
</feature>
<feature type="region of interest" description="Disordered" evidence="3">
    <location>
        <begin position="1"/>
        <end position="165"/>
    </location>
</feature>
<feature type="compositionally biased region" description="Polar residues" evidence="3">
    <location>
        <begin position="29"/>
        <end position="45"/>
    </location>
</feature>
<feature type="compositionally biased region" description="Pro residues" evidence="3">
    <location>
        <begin position="59"/>
        <end position="72"/>
    </location>
</feature>
<feature type="compositionally biased region" description="Low complexity" evidence="3">
    <location>
        <begin position="81"/>
        <end position="96"/>
    </location>
</feature>
<feature type="compositionally biased region" description="Low complexity" evidence="3">
    <location>
        <begin position="109"/>
        <end position="134"/>
    </location>
</feature>
<feature type="modified residue" description="Phosphoserine" evidence="2">
    <location>
        <position position="406"/>
    </location>
</feature>
<organism>
    <name type="scientific">Mus musculus</name>
    <name type="common">Mouse</name>
    <dbReference type="NCBI Taxonomy" id="10090"/>
    <lineage>
        <taxon>Eukaryota</taxon>
        <taxon>Metazoa</taxon>
        <taxon>Chordata</taxon>
        <taxon>Craniata</taxon>
        <taxon>Vertebrata</taxon>
        <taxon>Euteleostomi</taxon>
        <taxon>Mammalia</taxon>
        <taxon>Eutheria</taxon>
        <taxon>Euarchontoglires</taxon>
        <taxon>Glires</taxon>
        <taxon>Rodentia</taxon>
        <taxon>Myomorpha</taxon>
        <taxon>Muroidea</taxon>
        <taxon>Muridae</taxon>
        <taxon>Murinae</taxon>
        <taxon>Mus</taxon>
        <taxon>Mus</taxon>
    </lineage>
</organism>
<keyword id="KW-0963">Cytoplasm</keyword>
<keyword id="KW-0333">Golgi apparatus</keyword>
<keyword id="KW-0597">Phosphoprotein</keyword>
<keyword id="KW-1185">Reference proteome</keyword>
<name>PRRC1_MOUSE</name>
<reference key="1">
    <citation type="journal article" date="2005" name="Science">
        <title>The transcriptional landscape of the mammalian genome.</title>
        <authorList>
            <person name="Carninci P."/>
            <person name="Kasukawa T."/>
            <person name="Katayama S."/>
            <person name="Gough J."/>
            <person name="Frith M.C."/>
            <person name="Maeda N."/>
            <person name="Oyama R."/>
            <person name="Ravasi T."/>
            <person name="Lenhard B."/>
            <person name="Wells C."/>
            <person name="Kodzius R."/>
            <person name="Shimokawa K."/>
            <person name="Bajic V.B."/>
            <person name="Brenner S.E."/>
            <person name="Batalov S."/>
            <person name="Forrest A.R."/>
            <person name="Zavolan M."/>
            <person name="Davis M.J."/>
            <person name="Wilming L.G."/>
            <person name="Aidinis V."/>
            <person name="Allen J.E."/>
            <person name="Ambesi-Impiombato A."/>
            <person name="Apweiler R."/>
            <person name="Aturaliya R.N."/>
            <person name="Bailey T.L."/>
            <person name="Bansal M."/>
            <person name="Baxter L."/>
            <person name="Beisel K.W."/>
            <person name="Bersano T."/>
            <person name="Bono H."/>
            <person name="Chalk A.M."/>
            <person name="Chiu K.P."/>
            <person name="Choudhary V."/>
            <person name="Christoffels A."/>
            <person name="Clutterbuck D.R."/>
            <person name="Crowe M.L."/>
            <person name="Dalla E."/>
            <person name="Dalrymple B.P."/>
            <person name="de Bono B."/>
            <person name="Della Gatta G."/>
            <person name="di Bernardo D."/>
            <person name="Down T."/>
            <person name="Engstrom P."/>
            <person name="Fagiolini M."/>
            <person name="Faulkner G."/>
            <person name="Fletcher C.F."/>
            <person name="Fukushima T."/>
            <person name="Furuno M."/>
            <person name="Futaki S."/>
            <person name="Gariboldi M."/>
            <person name="Georgii-Hemming P."/>
            <person name="Gingeras T.R."/>
            <person name="Gojobori T."/>
            <person name="Green R.E."/>
            <person name="Gustincich S."/>
            <person name="Harbers M."/>
            <person name="Hayashi Y."/>
            <person name="Hensch T.K."/>
            <person name="Hirokawa N."/>
            <person name="Hill D."/>
            <person name="Huminiecki L."/>
            <person name="Iacono M."/>
            <person name="Ikeo K."/>
            <person name="Iwama A."/>
            <person name="Ishikawa T."/>
            <person name="Jakt M."/>
            <person name="Kanapin A."/>
            <person name="Katoh M."/>
            <person name="Kawasawa Y."/>
            <person name="Kelso J."/>
            <person name="Kitamura H."/>
            <person name="Kitano H."/>
            <person name="Kollias G."/>
            <person name="Krishnan S.P."/>
            <person name="Kruger A."/>
            <person name="Kummerfeld S.K."/>
            <person name="Kurochkin I.V."/>
            <person name="Lareau L.F."/>
            <person name="Lazarevic D."/>
            <person name="Lipovich L."/>
            <person name="Liu J."/>
            <person name="Liuni S."/>
            <person name="McWilliam S."/>
            <person name="Madan Babu M."/>
            <person name="Madera M."/>
            <person name="Marchionni L."/>
            <person name="Matsuda H."/>
            <person name="Matsuzawa S."/>
            <person name="Miki H."/>
            <person name="Mignone F."/>
            <person name="Miyake S."/>
            <person name="Morris K."/>
            <person name="Mottagui-Tabar S."/>
            <person name="Mulder N."/>
            <person name="Nakano N."/>
            <person name="Nakauchi H."/>
            <person name="Ng P."/>
            <person name="Nilsson R."/>
            <person name="Nishiguchi S."/>
            <person name="Nishikawa S."/>
            <person name="Nori F."/>
            <person name="Ohara O."/>
            <person name="Okazaki Y."/>
            <person name="Orlando V."/>
            <person name="Pang K.C."/>
            <person name="Pavan W.J."/>
            <person name="Pavesi G."/>
            <person name="Pesole G."/>
            <person name="Petrovsky N."/>
            <person name="Piazza S."/>
            <person name="Reed J."/>
            <person name="Reid J.F."/>
            <person name="Ring B.Z."/>
            <person name="Ringwald M."/>
            <person name="Rost B."/>
            <person name="Ruan Y."/>
            <person name="Salzberg S.L."/>
            <person name="Sandelin A."/>
            <person name="Schneider C."/>
            <person name="Schoenbach C."/>
            <person name="Sekiguchi K."/>
            <person name="Semple C.A."/>
            <person name="Seno S."/>
            <person name="Sessa L."/>
            <person name="Sheng Y."/>
            <person name="Shibata Y."/>
            <person name="Shimada H."/>
            <person name="Shimada K."/>
            <person name="Silva D."/>
            <person name="Sinclair B."/>
            <person name="Sperling S."/>
            <person name="Stupka E."/>
            <person name="Sugiura K."/>
            <person name="Sultana R."/>
            <person name="Takenaka Y."/>
            <person name="Taki K."/>
            <person name="Tammoja K."/>
            <person name="Tan S.L."/>
            <person name="Tang S."/>
            <person name="Taylor M.S."/>
            <person name="Tegner J."/>
            <person name="Teichmann S.A."/>
            <person name="Ueda H.R."/>
            <person name="van Nimwegen E."/>
            <person name="Verardo R."/>
            <person name="Wei C.L."/>
            <person name="Yagi K."/>
            <person name="Yamanishi H."/>
            <person name="Zabarovsky E."/>
            <person name="Zhu S."/>
            <person name="Zimmer A."/>
            <person name="Hide W."/>
            <person name="Bult C."/>
            <person name="Grimmond S.M."/>
            <person name="Teasdale R.D."/>
            <person name="Liu E.T."/>
            <person name="Brusic V."/>
            <person name="Quackenbush J."/>
            <person name="Wahlestedt C."/>
            <person name="Mattick J.S."/>
            <person name="Hume D.A."/>
            <person name="Kai C."/>
            <person name="Sasaki D."/>
            <person name="Tomaru Y."/>
            <person name="Fukuda S."/>
            <person name="Kanamori-Katayama M."/>
            <person name="Suzuki M."/>
            <person name="Aoki J."/>
            <person name="Arakawa T."/>
            <person name="Iida J."/>
            <person name="Imamura K."/>
            <person name="Itoh M."/>
            <person name="Kato T."/>
            <person name="Kawaji H."/>
            <person name="Kawagashira N."/>
            <person name="Kawashima T."/>
            <person name="Kojima M."/>
            <person name="Kondo S."/>
            <person name="Konno H."/>
            <person name="Nakano K."/>
            <person name="Ninomiya N."/>
            <person name="Nishio T."/>
            <person name="Okada M."/>
            <person name="Plessy C."/>
            <person name="Shibata K."/>
            <person name="Shiraki T."/>
            <person name="Suzuki S."/>
            <person name="Tagami M."/>
            <person name="Waki K."/>
            <person name="Watahiki A."/>
            <person name="Okamura-Oho Y."/>
            <person name="Suzuki H."/>
            <person name="Kawai J."/>
            <person name="Hayashizaki Y."/>
        </authorList>
    </citation>
    <scope>NUCLEOTIDE SEQUENCE [LARGE SCALE MRNA]</scope>
    <source>
        <strain>C57BL/6J</strain>
        <tissue>Embryo</tissue>
    </source>
</reference>
<reference key="2">
    <citation type="journal article" date="2004" name="Genome Res.">
        <title>The status, quality, and expansion of the NIH full-length cDNA project: the Mammalian Gene Collection (MGC).</title>
        <authorList>
            <consortium name="The MGC Project Team"/>
        </authorList>
    </citation>
    <scope>NUCLEOTIDE SEQUENCE [LARGE SCALE MRNA]</scope>
    <source>
        <strain>FVB/N</strain>
        <tissue>Mammary tumor</tissue>
    </source>
</reference>
<reference key="3">
    <citation type="journal article" date="2010" name="Cell">
        <title>A tissue-specific atlas of mouse protein phosphorylation and expression.</title>
        <authorList>
            <person name="Huttlin E.L."/>
            <person name="Jedrychowski M.P."/>
            <person name="Elias J.E."/>
            <person name="Goswami T."/>
            <person name="Rad R."/>
            <person name="Beausoleil S.A."/>
            <person name="Villen J."/>
            <person name="Haas W."/>
            <person name="Sowa M.E."/>
            <person name="Gygi S.P."/>
        </authorList>
    </citation>
    <scope>IDENTIFICATION BY MASS SPECTROMETRY [LARGE SCALE ANALYSIS]</scope>
    <source>
        <tissue>Brain</tissue>
        <tissue>Brown adipose tissue</tissue>
        <tissue>Heart</tissue>
        <tissue>Kidney</tissue>
        <tissue>Liver</tissue>
        <tissue>Lung</tissue>
        <tissue>Pancreas</tissue>
        <tissue>Spleen</tissue>
        <tissue>Testis</tissue>
    </source>
</reference>
<sequence length="443" mass="46298">MMEESGIETTPPGTPPLHPAGLAAVPSTEAHSAATSSFSSPNVSGMESLPPHVYSTPQPSLPPVQPSAPPPFVSMSPAPSVPLSGTSVPPSVSPSPATAFSGPPMSHFPPATSASGALLSAPPSGPPISGFSVGTTYDITRGHAGRAPQTPLMPSFSAPPVTGILPAPITQQASMTSLAQGPGTTSAITFPEEQEDPRINRGQDDAPAGGIWGFIKGVAGNPMVKSVLDKTKHSVESMITTLDPGMAPYIKSGGELDIVVTSNKEVKVAAVRDAFQEVFGLAVVVGEAGQSNIAPQPVGYAAGLKGAQERIDSLRRSGAIHEKQTAVSVENFIAELLPDKWFDIGCLVVEDPVHGIRLEAFTQATPVPLEFVQQAQSLTPQDYNLRWSGLLVTVGEVLEKSLLNVSRTDWHLAFTGMSRRQMIYSAAKAVAGMYKQRLPPRPM</sequence>
<comment type="function">
    <text evidence="1">May act as a regulator of the protein kinase A (PKA) during embryonic development.</text>
</comment>
<comment type="subunit">
    <text evidence="2">Interacts with PRKAR1A; resulting in PKA activation.</text>
</comment>
<comment type="subcellular location">
    <subcellularLocation>
        <location evidence="1">Golgi apparatus</location>
    </subcellularLocation>
    <subcellularLocation>
        <location evidence="1">Cytoplasm</location>
    </subcellularLocation>
</comment>
<comment type="similarity">
    <text evidence="4">Belongs to the PRRC1 family.</text>
</comment>
<comment type="sequence caution" evidence="4">
    <conflict type="erroneous initiation">
        <sequence resource="EMBL-CDS" id="AAH14817"/>
    </conflict>
</comment>
<gene>
    <name type="primary">Prrc1</name>
</gene>
<protein>
    <recommendedName>
        <fullName>Protein PRRC1</fullName>
    </recommendedName>
    <alternativeName>
        <fullName>Proline-rich and coiled-coil-containing protein 1</fullName>
    </alternativeName>
</protein>
<accession>Q3UPH1</accession>
<accession>Q91YT1</accession>
<evidence type="ECO:0000250" key="1">
    <source>
        <dbReference type="UniProtKB" id="Q5XJA3"/>
    </source>
</evidence>
<evidence type="ECO:0000250" key="2">
    <source>
        <dbReference type="UniProtKB" id="Q96M27"/>
    </source>
</evidence>
<evidence type="ECO:0000256" key="3">
    <source>
        <dbReference type="SAM" id="MobiDB-lite"/>
    </source>
</evidence>
<evidence type="ECO:0000305" key="4"/>
<proteinExistence type="evidence at protein level"/>